<proteinExistence type="inferred from homology"/>
<keyword id="KW-0423">Lactose metabolism</keyword>
<keyword id="KW-0456">Lyase</keyword>
<organism>
    <name type="scientific">Staphylococcus aureus (strain bovine RF122 / ET3-1)</name>
    <dbReference type="NCBI Taxonomy" id="273036"/>
    <lineage>
        <taxon>Bacteria</taxon>
        <taxon>Bacillati</taxon>
        <taxon>Bacillota</taxon>
        <taxon>Bacilli</taxon>
        <taxon>Bacillales</taxon>
        <taxon>Staphylococcaceae</taxon>
        <taxon>Staphylococcus</taxon>
    </lineage>
</organism>
<reference key="1">
    <citation type="journal article" date="2007" name="PLoS ONE">
        <title>Molecular correlates of host specialization in Staphylococcus aureus.</title>
        <authorList>
            <person name="Herron-Olson L."/>
            <person name="Fitzgerald J.R."/>
            <person name="Musser J.M."/>
            <person name="Kapur V."/>
        </authorList>
    </citation>
    <scope>NUCLEOTIDE SEQUENCE [LARGE SCALE GENOMIC DNA]</scope>
    <source>
        <strain>bovine RF122 / ET3-1</strain>
    </source>
</reference>
<protein>
    <recommendedName>
        <fullName evidence="1">Tagatose 1,6-diphosphate aldolase</fullName>
        <ecNumber evidence="1">4.1.2.40</ecNumber>
    </recommendedName>
    <alternativeName>
        <fullName evidence="1">D-tagatose-1,6-bisphosphate aldolase</fullName>
    </alternativeName>
    <alternativeName>
        <fullName evidence="1">Tagatose-bisphosphate aldolase</fullName>
    </alternativeName>
</protein>
<name>LACD_STAAB</name>
<evidence type="ECO:0000255" key="1">
    <source>
        <dbReference type="HAMAP-Rule" id="MF_00734"/>
    </source>
</evidence>
<dbReference type="EC" id="4.1.2.40" evidence="1"/>
<dbReference type="EMBL" id="AJ938182">
    <property type="protein sequence ID" value="CAI81762.1"/>
    <property type="molecule type" value="Genomic_DNA"/>
</dbReference>
<dbReference type="RefSeq" id="WP_000047024.1">
    <property type="nucleotide sequence ID" value="NC_007622.1"/>
</dbReference>
<dbReference type="SMR" id="Q2YYJ6"/>
<dbReference type="KEGG" id="sab:SAB2073c"/>
<dbReference type="HOGENOM" id="CLU_058971_0_1_9"/>
<dbReference type="UniPathway" id="UPA00704">
    <property type="reaction ID" value="UER00716"/>
</dbReference>
<dbReference type="GO" id="GO:0061595">
    <property type="term" value="F:6-deoxy-6-sulfofructose-1-phosphate aldolase activity"/>
    <property type="evidence" value="ECO:0007669"/>
    <property type="project" value="TreeGrafter"/>
</dbReference>
<dbReference type="GO" id="GO:0009024">
    <property type="term" value="F:tagatose-6-phosphate kinase activity"/>
    <property type="evidence" value="ECO:0007669"/>
    <property type="project" value="InterPro"/>
</dbReference>
<dbReference type="GO" id="GO:0009025">
    <property type="term" value="F:tagatose-bisphosphate aldolase activity"/>
    <property type="evidence" value="ECO:0007669"/>
    <property type="project" value="UniProtKB-UniRule"/>
</dbReference>
<dbReference type="GO" id="GO:1902777">
    <property type="term" value="P:6-sulfoquinovose(1-) catabolic process"/>
    <property type="evidence" value="ECO:0007669"/>
    <property type="project" value="TreeGrafter"/>
</dbReference>
<dbReference type="GO" id="GO:2001059">
    <property type="term" value="P:D-tagatose 6-phosphate catabolic process"/>
    <property type="evidence" value="ECO:0007669"/>
    <property type="project" value="UniProtKB-UniRule"/>
</dbReference>
<dbReference type="GO" id="GO:0019512">
    <property type="term" value="P:lactose catabolic process via tagatose-6-phosphate"/>
    <property type="evidence" value="ECO:0007669"/>
    <property type="project" value="InterPro"/>
</dbReference>
<dbReference type="FunFam" id="3.20.20.70:FF:000137">
    <property type="entry name" value="Tagatose 1,6-diphosphate aldolase 2"/>
    <property type="match status" value="1"/>
</dbReference>
<dbReference type="Gene3D" id="3.20.20.70">
    <property type="entry name" value="Aldolase class I"/>
    <property type="match status" value="1"/>
</dbReference>
<dbReference type="HAMAP" id="MF_00734">
    <property type="entry name" value="LacD"/>
    <property type="match status" value="1"/>
</dbReference>
<dbReference type="InterPro" id="IPR013785">
    <property type="entry name" value="Aldolase_TIM"/>
</dbReference>
<dbReference type="InterPro" id="IPR002915">
    <property type="entry name" value="DeoC/FbaB/LacD_aldolase"/>
</dbReference>
<dbReference type="InterPro" id="IPR050552">
    <property type="entry name" value="LacD_aldolase"/>
</dbReference>
<dbReference type="InterPro" id="IPR005927">
    <property type="entry name" value="Tag_1.6-dipho_adolase"/>
</dbReference>
<dbReference type="NCBIfam" id="TIGR01232">
    <property type="entry name" value="lacD"/>
    <property type="match status" value="1"/>
</dbReference>
<dbReference type="NCBIfam" id="NF003180">
    <property type="entry name" value="PRK04161.1"/>
    <property type="match status" value="1"/>
</dbReference>
<dbReference type="NCBIfam" id="NF009065">
    <property type="entry name" value="PRK12399.1"/>
    <property type="match status" value="1"/>
</dbReference>
<dbReference type="NCBIfam" id="NF009498">
    <property type="entry name" value="PRK12858.1"/>
    <property type="match status" value="1"/>
</dbReference>
<dbReference type="PANTHER" id="PTHR39340">
    <property type="entry name" value="SULFOFRUCTOSEPHOSPHATE ALDOLASE"/>
    <property type="match status" value="1"/>
</dbReference>
<dbReference type="PANTHER" id="PTHR39340:SF1">
    <property type="entry name" value="SULFOFRUCTOSEPHOSPHATE ALDOLASE"/>
    <property type="match status" value="1"/>
</dbReference>
<dbReference type="Pfam" id="PF01791">
    <property type="entry name" value="DeoC"/>
    <property type="match status" value="1"/>
</dbReference>
<dbReference type="SMART" id="SM01133">
    <property type="entry name" value="DeoC"/>
    <property type="match status" value="1"/>
</dbReference>
<dbReference type="SUPFAM" id="SSF51569">
    <property type="entry name" value="Aldolase"/>
    <property type="match status" value="1"/>
</dbReference>
<accession>Q2YYJ6</accession>
<feature type="chain" id="PRO_1000045978" description="Tagatose 1,6-diphosphate aldolase">
    <location>
        <begin position="1"/>
        <end position="326"/>
    </location>
</feature>
<gene>
    <name evidence="1" type="primary">lacD</name>
    <name type="ordered locus">SAB2073c</name>
</gene>
<comment type="catalytic activity">
    <reaction evidence="1">
        <text>D-tagatofuranose 1,6-bisphosphate = D-glyceraldehyde 3-phosphate + dihydroxyacetone phosphate</text>
        <dbReference type="Rhea" id="RHEA:22948"/>
        <dbReference type="ChEBI" id="CHEBI:57642"/>
        <dbReference type="ChEBI" id="CHEBI:58694"/>
        <dbReference type="ChEBI" id="CHEBI:59776"/>
        <dbReference type="EC" id="4.1.2.40"/>
    </reaction>
</comment>
<comment type="pathway">
    <text evidence="1">Carbohydrate metabolism; D-tagatose 6-phosphate degradation; D-glyceraldehyde 3-phosphate and glycerone phosphate from D-tagatose 6-phosphate: step 2/2.</text>
</comment>
<comment type="similarity">
    <text evidence="1">Belongs to the aldolase LacD family.</text>
</comment>
<sequence>MSKSNQKIASIEQLSNNEGIISALAFDQRGALKRMMAKHQTEEPTVAQIEQLKVLVAEELTQYASSILLDPEYGLPASDARNKDCGLLLAYEKTGYDVNAKGRLPDCLVEWSAKRLKEQGANAVKFLLYYDVDDTEEINVQKKAYIERIGSECVAEDIPFFLEVLTYDDNIPDNGSVEFAKVKPRKVNEAMKLFSEPRFNVDVLKVEVPVNMKYVEGFAEGEVVYTKEEAAQHFKDQDVATHLPYIYLSAGVSAELFQETLKFAHEAGAKFNGVLCGRATWSGAVQVYIEQGEDAAREWLRTTGFKNIDDLNKVLKDTATSWKQRK</sequence>